<gene>
    <name type="primary">abcA11</name>
    <name type="ORF">DDB_G0275453</name>
</gene>
<accession>Q552P3</accession>
<sequence>MRHQNKNHKQRPSFLSQFLVILWFRTKLSIRDKKFFILGILLPMISIGASIILNNVLVFGPGSDFQKTNNNLNNNNIFITPKTLNSQQETLINTMKLQYSLNYTYLDDDTDLPNYIENKSLSSLDYGISFIGSNGINIYYNSSIESIPSFVHSFFISLFKINGINLQLNETITVLSSEVTFDAFYLLMPMILQYGFVFFIPYFAILIVTDRDKGFKNHLILNSLRTSVYWFGNLVFDYLIFLIPTIIGWILLYSFKIDGIYSDNSGKSFLLFLTFGISAIPFGFVLQFIFDKEETANKWLYPFTSIVTSIPSALISVAFPTSTPLIVELLLSILPTFSFCNGLKALTYNNSSTVSYTILIQLLSGLIYLILIYFIDNYKKPKKNEIINDEDSESIINNQIIEDNDVLNEKEKIKRLVRDGGGNNNNNKKNNSYPKIVVDGIYKQFIQPKPTLDKPSIIERCSGGTKATKKNSIIKKAVDGIWFSVEKNEIFGLLGPNGSGKSTCLNLLTGLLKADQGDGYLSGKSIDKDKDVFQSIGSCAQNDILFENLTIYEHLYLFSRLKSITTTKSELEDEIDFYINKFSIQSFKNKKSSDLSGGTKRKLSVACCLIGDPQVVLLDEPSTSLDPISRNELHSLIDELKVNKSIIMTTHSINEINQCCNRVAIMVDGKIRCIGTPNHLKHKYGSGYTIDIIPNNYLNNSYEIHNFMAQTFPNATRVERLGRFISYDLPSQNQQSLSTIFRILQSNKQRLQILDFSASSSSLEKVFLKFANLQEEINKQQTNNKSNIINNNNNNNNNNNNNNNNNNNNNNNNNNNNNNNNNTNNNTNNNQLIN</sequence>
<evidence type="ECO:0000255" key="1"/>
<evidence type="ECO:0000255" key="2">
    <source>
        <dbReference type="PROSITE-ProRule" id="PRU00434"/>
    </source>
</evidence>
<evidence type="ECO:0000256" key="3">
    <source>
        <dbReference type="SAM" id="MobiDB-lite"/>
    </source>
</evidence>
<evidence type="ECO:0000305" key="4"/>
<dbReference type="EMBL" id="AAFI02000013">
    <property type="protein sequence ID" value="EAL69477.1"/>
    <property type="molecule type" value="Genomic_DNA"/>
</dbReference>
<dbReference type="RefSeq" id="XP_643638.1">
    <property type="nucleotide sequence ID" value="XM_638546.1"/>
</dbReference>
<dbReference type="STRING" id="44689.Q552P3"/>
<dbReference type="PaxDb" id="44689-DDB0219981"/>
<dbReference type="EnsemblProtists" id="EAL69477">
    <property type="protein sequence ID" value="EAL69477"/>
    <property type="gene ID" value="DDB_G0275453"/>
</dbReference>
<dbReference type="GeneID" id="8620225"/>
<dbReference type="KEGG" id="ddi:DDB_G0275453"/>
<dbReference type="dictyBase" id="DDB_G0275453">
    <property type="gene designation" value="abcA11"/>
</dbReference>
<dbReference type="VEuPathDB" id="AmoebaDB:DDB_G0275453"/>
<dbReference type="eggNOG" id="KOG0059">
    <property type="taxonomic scope" value="Eukaryota"/>
</dbReference>
<dbReference type="HOGENOM" id="CLU_340527_0_0_1"/>
<dbReference type="InParanoid" id="Q552P3"/>
<dbReference type="OMA" id="TANKWLY"/>
<dbReference type="PhylomeDB" id="Q552P3"/>
<dbReference type="PRO" id="PR:Q552P3"/>
<dbReference type="Proteomes" id="UP000002195">
    <property type="component" value="Chromosome 2"/>
</dbReference>
<dbReference type="GO" id="GO:0043190">
    <property type="term" value="C:ATP-binding cassette (ABC) transporter complex"/>
    <property type="evidence" value="ECO:0000317"/>
    <property type="project" value="dictyBase"/>
</dbReference>
<dbReference type="GO" id="GO:0043231">
    <property type="term" value="C:intracellular membrane-bounded organelle"/>
    <property type="evidence" value="ECO:0000318"/>
    <property type="project" value="GO_Central"/>
</dbReference>
<dbReference type="GO" id="GO:0140359">
    <property type="term" value="F:ABC-type transporter activity"/>
    <property type="evidence" value="ECO:0007669"/>
    <property type="project" value="InterPro"/>
</dbReference>
<dbReference type="GO" id="GO:0005524">
    <property type="term" value="F:ATP binding"/>
    <property type="evidence" value="ECO:0007669"/>
    <property type="project" value="UniProtKB-KW"/>
</dbReference>
<dbReference type="GO" id="GO:0016887">
    <property type="term" value="F:ATP hydrolysis activity"/>
    <property type="evidence" value="ECO:0007669"/>
    <property type="project" value="InterPro"/>
</dbReference>
<dbReference type="GO" id="GO:0042626">
    <property type="term" value="F:ATPase-coupled transmembrane transporter activity"/>
    <property type="evidence" value="ECO:0000318"/>
    <property type="project" value="GO_Central"/>
</dbReference>
<dbReference type="GO" id="GO:0005319">
    <property type="term" value="F:lipid transporter activity"/>
    <property type="evidence" value="ECO:0000318"/>
    <property type="project" value="GO_Central"/>
</dbReference>
<dbReference type="GO" id="GO:0006869">
    <property type="term" value="P:lipid transport"/>
    <property type="evidence" value="ECO:0000318"/>
    <property type="project" value="GO_Central"/>
</dbReference>
<dbReference type="GO" id="GO:0031288">
    <property type="term" value="P:sorocarp morphogenesis"/>
    <property type="evidence" value="ECO:0000318"/>
    <property type="project" value="GO_Central"/>
</dbReference>
<dbReference type="CDD" id="cd03263">
    <property type="entry name" value="ABC_subfamily_A"/>
    <property type="match status" value="1"/>
</dbReference>
<dbReference type="FunFam" id="3.40.50.300:FF:000335">
    <property type="entry name" value="ATP binding cassette subfamily A member 5"/>
    <property type="match status" value="1"/>
</dbReference>
<dbReference type="Gene3D" id="3.40.50.300">
    <property type="entry name" value="P-loop containing nucleotide triphosphate hydrolases"/>
    <property type="match status" value="1"/>
</dbReference>
<dbReference type="InterPro" id="IPR003593">
    <property type="entry name" value="AAA+_ATPase"/>
</dbReference>
<dbReference type="InterPro" id="IPR013525">
    <property type="entry name" value="ABC2_TM"/>
</dbReference>
<dbReference type="InterPro" id="IPR003439">
    <property type="entry name" value="ABC_transporter-like_ATP-bd"/>
</dbReference>
<dbReference type="InterPro" id="IPR026082">
    <property type="entry name" value="ABCA"/>
</dbReference>
<dbReference type="InterPro" id="IPR027417">
    <property type="entry name" value="P-loop_NTPase"/>
</dbReference>
<dbReference type="InterPro" id="IPR056264">
    <property type="entry name" value="R2_ABCA1-4-like"/>
</dbReference>
<dbReference type="PANTHER" id="PTHR19229:SF217">
    <property type="entry name" value="ABC TRANSPORTER A FAMILY MEMBER 10-RELATED"/>
    <property type="match status" value="1"/>
</dbReference>
<dbReference type="PANTHER" id="PTHR19229">
    <property type="entry name" value="ATP-BINDING CASSETTE TRANSPORTER SUBFAMILY A ABCA"/>
    <property type="match status" value="1"/>
</dbReference>
<dbReference type="Pfam" id="PF12698">
    <property type="entry name" value="ABC2_membrane_3"/>
    <property type="match status" value="1"/>
</dbReference>
<dbReference type="Pfam" id="PF00005">
    <property type="entry name" value="ABC_tran"/>
    <property type="match status" value="1"/>
</dbReference>
<dbReference type="Pfam" id="PF23321">
    <property type="entry name" value="R1_ABCA1"/>
    <property type="match status" value="1"/>
</dbReference>
<dbReference type="SMART" id="SM00382">
    <property type="entry name" value="AAA"/>
    <property type="match status" value="1"/>
</dbReference>
<dbReference type="SUPFAM" id="SSF52540">
    <property type="entry name" value="P-loop containing nucleoside triphosphate hydrolases"/>
    <property type="match status" value="1"/>
</dbReference>
<dbReference type="PROSITE" id="PS50893">
    <property type="entry name" value="ABC_TRANSPORTER_2"/>
    <property type="match status" value="1"/>
</dbReference>
<organism>
    <name type="scientific">Dictyostelium discoideum</name>
    <name type="common">Social amoeba</name>
    <dbReference type="NCBI Taxonomy" id="44689"/>
    <lineage>
        <taxon>Eukaryota</taxon>
        <taxon>Amoebozoa</taxon>
        <taxon>Evosea</taxon>
        <taxon>Eumycetozoa</taxon>
        <taxon>Dictyostelia</taxon>
        <taxon>Dictyosteliales</taxon>
        <taxon>Dictyosteliaceae</taxon>
        <taxon>Dictyostelium</taxon>
    </lineage>
</organism>
<proteinExistence type="inferred from homology"/>
<reference key="1">
    <citation type="journal article" date="2002" name="Nature">
        <title>Sequence and analysis of chromosome 2 of Dictyostelium discoideum.</title>
        <authorList>
            <person name="Gloeckner G."/>
            <person name="Eichinger L."/>
            <person name="Szafranski K."/>
            <person name="Pachebat J.A."/>
            <person name="Bankier A.T."/>
            <person name="Dear P.H."/>
            <person name="Lehmann R."/>
            <person name="Baumgart C."/>
            <person name="Parra G."/>
            <person name="Abril J.F."/>
            <person name="Guigo R."/>
            <person name="Kumpf K."/>
            <person name="Tunggal B."/>
            <person name="Cox E.C."/>
            <person name="Quail M.A."/>
            <person name="Platzer M."/>
            <person name="Rosenthal A."/>
            <person name="Noegel A.A."/>
        </authorList>
    </citation>
    <scope>NUCLEOTIDE SEQUENCE [LARGE SCALE GENOMIC DNA]</scope>
    <source>
        <strain>AX4</strain>
    </source>
</reference>
<reference key="2">
    <citation type="journal article" date="2005" name="Nature">
        <title>The genome of the social amoeba Dictyostelium discoideum.</title>
        <authorList>
            <person name="Eichinger L."/>
            <person name="Pachebat J.A."/>
            <person name="Gloeckner G."/>
            <person name="Rajandream M.A."/>
            <person name="Sucgang R."/>
            <person name="Berriman M."/>
            <person name="Song J."/>
            <person name="Olsen R."/>
            <person name="Szafranski K."/>
            <person name="Xu Q."/>
            <person name="Tunggal B."/>
            <person name="Kummerfeld S."/>
            <person name="Madera M."/>
            <person name="Konfortov B.A."/>
            <person name="Rivero F."/>
            <person name="Bankier A.T."/>
            <person name="Lehmann R."/>
            <person name="Hamlin N."/>
            <person name="Davies R."/>
            <person name="Gaudet P."/>
            <person name="Fey P."/>
            <person name="Pilcher K."/>
            <person name="Chen G."/>
            <person name="Saunders D."/>
            <person name="Sodergren E.J."/>
            <person name="Davis P."/>
            <person name="Kerhornou A."/>
            <person name="Nie X."/>
            <person name="Hall N."/>
            <person name="Anjard C."/>
            <person name="Hemphill L."/>
            <person name="Bason N."/>
            <person name="Farbrother P."/>
            <person name="Desany B."/>
            <person name="Just E."/>
            <person name="Morio T."/>
            <person name="Rost R."/>
            <person name="Churcher C.M."/>
            <person name="Cooper J."/>
            <person name="Haydock S."/>
            <person name="van Driessche N."/>
            <person name="Cronin A."/>
            <person name="Goodhead I."/>
            <person name="Muzny D.M."/>
            <person name="Mourier T."/>
            <person name="Pain A."/>
            <person name="Lu M."/>
            <person name="Harper D."/>
            <person name="Lindsay R."/>
            <person name="Hauser H."/>
            <person name="James K.D."/>
            <person name="Quiles M."/>
            <person name="Madan Babu M."/>
            <person name="Saito T."/>
            <person name="Buchrieser C."/>
            <person name="Wardroper A."/>
            <person name="Felder M."/>
            <person name="Thangavelu M."/>
            <person name="Johnson D."/>
            <person name="Knights A."/>
            <person name="Loulseged H."/>
            <person name="Mungall K.L."/>
            <person name="Oliver K."/>
            <person name="Price C."/>
            <person name="Quail M.A."/>
            <person name="Urushihara H."/>
            <person name="Hernandez J."/>
            <person name="Rabbinowitsch E."/>
            <person name="Steffen D."/>
            <person name="Sanders M."/>
            <person name="Ma J."/>
            <person name="Kohara Y."/>
            <person name="Sharp S."/>
            <person name="Simmonds M.N."/>
            <person name="Spiegler S."/>
            <person name="Tivey A."/>
            <person name="Sugano S."/>
            <person name="White B."/>
            <person name="Walker D."/>
            <person name="Woodward J.R."/>
            <person name="Winckler T."/>
            <person name="Tanaka Y."/>
            <person name="Shaulsky G."/>
            <person name="Schleicher M."/>
            <person name="Weinstock G.M."/>
            <person name="Rosenthal A."/>
            <person name="Cox E.C."/>
            <person name="Chisholm R.L."/>
            <person name="Gibbs R.A."/>
            <person name="Loomis W.F."/>
            <person name="Platzer M."/>
            <person name="Kay R.R."/>
            <person name="Williams J.G."/>
            <person name="Dear P.H."/>
            <person name="Noegel A.A."/>
            <person name="Barrell B.G."/>
            <person name="Kuspa A."/>
        </authorList>
    </citation>
    <scope>NUCLEOTIDE SEQUENCE [LARGE SCALE GENOMIC DNA]</scope>
    <source>
        <strain>AX4</strain>
    </source>
</reference>
<name>ABCAB_DICDI</name>
<feature type="chain" id="PRO_0000363843" description="ABC transporter A family member 11">
    <location>
        <begin position="1"/>
        <end position="834"/>
    </location>
</feature>
<feature type="transmembrane region" description="Helical" evidence="1">
    <location>
        <begin position="35"/>
        <end position="55"/>
    </location>
</feature>
<feature type="transmembrane region" description="Helical" evidence="1">
    <location>
        <begin position="188"/>
        <end position="208"/>
    </location>
</feature>
<feature type="transmembrane region" description="Helical" evidence="1">
    <location>
        <begin position="235"/>
        <end position="255"/>
    </location>
</feature>
<feature type="transmembrane region" description="Helical" evidence="1">
    <location>
        <begin position="269"/>
        <end position="289"/>
    </location>
</feature>
<feature type="transmembrane region" description="Helical" evidence="1">
    <location>
        <begin position="297"/>
        <end position="319"/>
    </location>
</feature>
<feature type="transmembrane region" description="Helical" evidence="1">
    <location>
        <begin position="324"/>
        <end position="346"/>
    </location>
</feature>
<feature type="transmembrane region" description="Helical" evidence="1">
    <location>
        <begin position="355"/>
        <end position="375"/>
    </location>
</feature>
<feature type="domain" description="ABC transporter" evidence="2">
    <location>
        <begin position="452"/>
        <end position="693"/>
    </location>
</feature>
<feature type="region of interest" description="Disordered" evidence="3">
    <location>
        <begin position="779"/>
        <end position="834"/>
    </location>
</feature>
<feature type="compositionally biased region" description="Polar residues" evidence="3">
    <location>
        <begin position="779"/>
        <end position="789"/>
    </location>
</feature>
<feature type="compositionally biased region" description="Low complexity" evidence="3">
    <location>
        <begin position="790"/>
        <end position="834"/>
    </location>
</feature>
<feature type="binding site" evidence="2">
    <location>
        <begin position="495"/>
        <end position="502"/>
    </location>
    <ligand>
        <name>ATP</name>
        <dbReference type="ChEBI" id="CHEBI:30616"/>
    </ligand>
</feature>
<protein>
    <recommendedName>
        <fullName>ABC transporter A family member 11</fullName>
    </recommendedName>
    <alternativeName>
        <fullName>ABC transporter ABCA.11</fullName>
    </alternativeName>
</protein>
<comment type="subcellular location">
    <subcellularLocation>
        <location evidence="4">Membrane</location>
        <topology evidence="4">Multi-pass membrane protein</topology>
    </subcellularLocation>
</comment>
<comment type="similarity">
    <text evidence="4">Belongs to the ABC transporter superfamily. ABCA family.</text>
</comment>
<keyword id="KW-0067">ATP-binding</keyword>
<keyword id="KW-0472">Membrane</keyword>
<keyword id="KW-0547">Nucleotide-binding</keyword>
<keyword id="KW-1185">Reference proteome</keyword>
<keyword id="KW-0812">Transmembrane</keyword>
<keyword id="KW-1133">Transmembrane helix</keyword>
<keyword id="KW-0813">Transport</keyword>